<reference key="1">
    <citation type="journal article" date="2009" name="BMC Genomics">
        <title>Genome evolution driven by host adaptations results in a more virulent and antimicrobial-resistant Streptococcus pneumoniae serotype 14.</title>
        <authorList>
            <person name="Ding F."/>
            <person name="Tang P."/>
            <person name="Hsu M.-H."/>
            <person name="Cui P."/>
            <person name="Hu S."/>
            <person name="Yu J."/>
            <person name="Chiu C.-H."/>
        </authorList>
    </citation>
    <scope>NUCLEOTIDE SEQUENCE [LARGE SCALE GENOMIC DNA]</scope>
    <source>
        <strain>CGSP14</strain>
    </source>
</reference>
<feature type="chain" id="PRO_1000126010" description="Small ribosomal subunit protein uS7">
    <location>
        <begin position="1"/>
        <end position="156"/>
    </location>
</feature>
<dbReference type="EMBL" id="CP001033">
    <property type="protein sequence ID" value="ACB89535.1"/>
    <property type="molecule type" value="Genomic_DNA"/>
</dbReference>
<dbReference type="RefSeq" id="WP_000087873.1">
    <property type="nucleotide sequence ID" value="NC_010582.1"/>
</dbReference>
<dbReference type="SMR" id="B2ISJ8"/>
<dbReference type="GeneID" id="93738576"/>
<dbReference type="KEGG" id="spw:SPCG_0283"/>
<dbReference type="HOGENOM" id="CLU_072226_1_1_9"/>
<dbReference type="GO" id="GO:0015935">
    <property type="term" value="C:small ribosomal subunit"/>
    <property type="evidence" value="ECO:0007669"/>
    <property type="project" value="InterPro"/>
</dbReference>
<dbReference type="GO" id="GO:0019843">
    <property type="term" value="F:rRNA binding"/>
    <property type="evidence" value="ECO:0007669"/>
    <property type="project" value="UniProtKB-UniRule"/>
</dbReference>
<dbReference type="GO" id="GO:0003735">
    <property type="term" value="F:structural constituent of ribosome"/>
    <property type="evidence" value="ECO:0007669"/>
    <property type="project" value="InterPro"/>
</dbReference>
<dbReference type="GO" id="GO:0000049">
    <property type="term" value="F:tRNA binding"/>
    <property type="evidence" value="ECO:0007669"/>
    <property type="project" value="UniProtKB-UniRule"/>
</dbReference>
<dbReference type="GO" id="GO:0006412">
    <property type="term" value="P:translation"/>
    <property type="evidence" value="ECO:0007669"/>
    <property type="project" value="UniProtKB-UniRule"/>
</dbReference>
<dbReference type="CDD" id="cd14869">
    <property type="entry name" value="uS7_Bacteria"/>
    <property type="match status" value="1"/>
</dbReference>
<dbReference type="FunFam" id="1.10.455.10:FF:000001">
    <property type="entry name" value="30S ribosomal protein S7"/>
    <property type="match status" value="1"/>
</dbReference>
<dbReference type="Gene3D" id="1.10.455.10">
    <property type="entry name" value="Ribosomal protein S7 domain"/>
    <property type="match status" value="1"/>
</dbReference>
<dbReference type="HAMAP" id="MF_00480_B">
    <property type="entry name" value="Ribosomal_uS7_B"/>
    <property type="match status" value="1"/>
</dbReference>
<dbReference type="InterPro" id="IPR000235">
    <property type="entry name" value="Ribosomal_uS7"/>
</dbReference>
<dbReference type="InterPro" id="IPR005717">
    <property type="entry name" value="Ribosomal_uS7_bac/org-type"/>
</dbReference>
<dbReference type="InterPro" id="IPR020606">
    <property type="entry name" value="Ribosomal_uS7_CS"/>
</dbReference>
<dbReference type="InterPro" id="IPR023798">
    <property type="entry name" value="Ribosomal_uS7_dom"/>
</dbReference>
<dbReference type="InterPro" id="IPR036823">
    <property type="entry name" value="Ribosomal_uS7_dom_sf"/>
</dbReference>
<dbReference type="NCBIfam" id="TIGR01029">
    <property type="entry name" value="rpsG_bact"/>
    <property type="match status" value="1"/>
</dbReference>
<dbReference type="PANTHER" id="PTHR11205">
    <property type="entry name" value="RIBOSOMAL PROTEIN S7"/>
    <property type="match status" value="1"/>
</dbReference>
<dbReference type="Pfam" id="PF00177">
    <property type="entry name" value="Ribosomal_S7"/>
    <property type="match status" value="1"/>
</dbReference>
<dbReference type="PIRSF" id="PIRSF002122">
    <property type="entry name" value="RPS7p_RPS7a_RPS5e_RPS7o"/>
    <property type="match status" value="1"/>
</dbReference>
<dbReference type="SUPFAM" id="SSF47973">
    <property type="entry name" value="Ribosomal protein S7"/>
    <property type="match status" value="1"/>
</dbReference>
<dbReference type="PROSITE" id="PS00052">
    <property type="entry name" value="RIBOSOMAL_S7"/>
    <property type="match status" value="1"/>
</dbReference>
<organism>
    <name type="scientific">Streptococcus pneumoniae (strain CGSP14)</name>
    <dbReference type="NCBI Taxonomy" id="516950"/>
    <lineage>
        <taxon>Bacteria</taxon>
        <taxon>Bacillati</taxon>
        <taxon>Bacillota</taxon>
        <taxon>Bacilli</taxon>
        <taxon>Lactobacillales</taxon>
        <taxon>Streptococcaceae</taxon>
        <taxon>Streptococcus</taxon>
    </lineage>
</organism>
<proteinExistence type="inferred from homology"/>
<accession>B2ISJ8</accession>
<comment type="function">
    <text evidence="1">One of the primary rRNA binding proteins, it binds directly to 16S rRNA where it nucleates assembly of the head domain of the 30S subunit. Is located at the subunit interface close to the decoding center, probably blocks exit of the E-site tRNA.</text>
</comment>
<comment type="subunit">
    <text evidence="1">Part of the 30S ribosomal subunit. Contacts proteins S9 and S11.</text>
</comment>
<comment type="similarity">
    <text evidence="1">Belongs to the universal ribosomal protein uS7 family.</text>
</comment>
<evidence type="ECO:0000255" key="1">
    <source>
        <dbReference type="HAMAP-Rule" id="MF_00480"/>
    </source>
</evidence>
<evidence type="ECO:0000305" key="2"/>
<sequence length="156" mass="17756">MSRKNRAPKRDVLPDPLYNSQLVTRLINRVMLDGKRGTAASIVYGAFEQIKEATGNDALEVFETAMENIMPVLEVRARRVGGSNYQVPVEVRPERRTTLGLRWLVTIARLRGEHTMQDRLAKEILDAANNTGAAVKKREDTHRMAEANRAFAHFRW</sequence>
<protein>
    <recommendedName>
        <fullName evidence="1">Small ribosomal subunit protein uS7</fullName>
    </recommendedName>
    <alternativeName>
        <fullName evidence="2">30S ribosomal protein S7</fullName>
    </alternativeName>
</protein>
<gene>
    <name evidence="1" type="primary">rpsG</name>
    <name type="ordered locus">SPCG_0283</name>
</gene>
<name>RS7_STRPS</name>
<keyword id="KW-0687">Ribonucleoprotein</keyword>
<keyword id="KW-0689">Ribosomal protein</keyword>
<keyword id="KW-0694">RNA-binding</keyword>
<keyword id="KW-0699">rRNA-binding</keyword>
<keyword id="KW-0820">tRNA-binding</keyword>